<evidence type="ECO:0000250" key="1"/>
<evidence type="ECO:0000256" key="2">
    <source>
        <dbReference type="SAM" id="MobiDB-lite"/>
    </source>
</evidence>
<evidence type="ECO:0000305" key="3"/>
<proteinExistence type="inferred from homology"/>
<protein>
    <recommendedName>
        <fullName>Dynein axonemal assembly factor 1 homolog</fullName>
    </recommendedName>
    <alternativeName>
        <fullName>Defective transmitter-recycling protein</fullName>
    </alternativeName>
    <alternativeName>
        <fullName>Leucine-rich repeat-containing protein 50 homolog</fullName>
    </alternativeName>
</protein>
<dbReference type="EMBL" id="CM000158">
    <property type="protein sequence ID" value="EDW89936.1"/>
    <property type="molecule type" value="Genomic_DNA"/>
</dbReference>
<dbReference type="SMR" id="B4P6W7"/>
<dbReference type="EnsemblMetazoa" id="FBtr0259433">
    <property type="protein sequence ID" value="FBpp0257925"/>
    <property type="gene ID" value="FBgn0230630"/>
</dbReference>
<dbReference type="EnsemblMetazoa" id="XM_002090188.3">
    <property type="protein sequence ID" value="XP_002090224.1"/>
    <property type="gene ID" value="LOC6529217"/>
</dbReference>
<dbReference type="GeneID" id="6529217"/>
<dbReference type="KEGG" id="dya:Dyak_GE12915"/>
<dbReference type="CTD" id="318856"/>
<dbReference type="eggNOG" id="ENOG502QQFE">
    <property type="taxonomic scope" value="Eukaryota"/>
</dbReference>
<dbReference type="HOGENOM" id="CLU_001523_0_0_1"/>
<dbReference type="OMA" id="WKREGYE"/>
<dbReference type="OrthoDB" id="1904536at2759"/>
<dbReference type="PhylomeDB" id="B4P6W7"/>
<dbReference type="ChiTaRS" id="Trxr-1">
    <property type="organism name" value="fly"/>
</dbReference>
<dbReference type="Proteomes" id="UP000002282">
    <property type="component" value="Chromosome 2R"/>
</dbReference>
<dbReference type="GO" id="GO:0005930">
    <property type="term" value="C:axoneme"/>
    <property type="evidence" value="ECO:0000250"/>
    <property type="project" value="UniProtKB"/>
</dbReference>
<dbReference type="GO" id="GO:0045202">
    <property type="term" value="C:synapse"/>
    <property type="evidence" value="ECO:0007669"/>
    <property type="project" value="GOC"/>
</dbReference>
<dbReference type="GO" id="GO:0070840">
    <property type="term" value="F:dynein complex binding"/>
    <property type="evidence" value="ECO:0000250"/>
    <property type="project" value="UniProtKB"/>
</dbReference>
<dbReference type="GO" id="GO:0035082">
    <property type="term" value="P:axoneme assembly"/>
    <property type="evidence" value="ECO:0007669"/>
    <property type="project" value="TreeGrafter"/>
</dbReference>
<dbReference type="GO" id="GO:0007268">
    <property type="term" value="P:chemical synaptic transmission"/>
    <property type="evidence" value="ECO:0007669"/>
    <property type="project" value="EnsemblMetazoa"/>
</dbReference>
<dbReference type="GO" id="GO:0060271">
    <property type="term" value="P:cilium assembly"/>
    <property type="evidence" value="ECO:0000250"/>
    <property type="project" value="UniProtKB"/>
</dbReference>
<dbReference type="FunFam" id="3.80.10.10:FF:000166">
    <property type="entry name" value="Dynein assembly factor 1, axonemal"/>
    <property type="match status" value="1"/>
</dbReference>
<dbReference type="FunFam" id="3.80.10.10:FF:000331">
    <property type="entry name" value="Dynein assembly factor 1, axonemal homolog"/>
    <property type="match status" value="1"/>
</dbReference>
<dbReference type="Gene3D" id="3.80.10.10">
    <property type="entry name" value="Ribonuclease Inhibitor"/>
    <property type="match status" value="2"/>
</dbReference>
<dbReference type="InterPro" id="IPR050576">
    <property type="entry name" value="Cilia_flagella_integrity"/>
</dbReference>
<dbReference type="InterPro" id="IPR001611">
    <property type="entry name" value="Leu-rich_rpt"/>
</dbReference>
<dbReference type="InterPro" id="IPR025875">
    <property type="entry name" value="Leu-rich_rpt_4"/>
</dbReference>
<dbReference type="InterPro" id="IPR032675">
    <property type="entry name" value="LRR_dom_sf"/>
</dbReference>
<dbReference type="PANTHER" id="PTHR45973:SF9">
    <property type="entry name" value="LEUCINE-RICH REPEAT-CONTAINING PROTEIN 46"/>
    <property type="match status" value="1"/>
</dbReference>
<dbReference type="PANTHER" id="PTHR45973">
    <property type="entry name" value="PROTEIN PHOSPHATASE 1 REGULATORY SUBUNIT SDS22-RELATED"/>
    <property type="match status" value="1"/>
</dbReference>
<dbReference type="Pfam" id="PF12799">
    <property type="entry name" value="LRR_4"/>
    <property type="match status" value="1"/>
</dbReference>
<dbReference type="Pfam" id="PF14580">
    <property type="entry name" value="LRR_9"/>
    <property type="match status" value="1"/>
</dbReference>
<dbReference type="SMART" id="SM00365">
    <property type="entry name" value="LRR_SD22"/>
    <property type="match status" value="3"/>
</dbReference>
<dbReference type="SUPFAM" id="SSF52075">
    <property type="entry name" value="Outer arm dynein light chain 1"/>
    <property type="match status" value="1"/>
</dbReference>
<dbReference type="PROSITE" id="PS51450">
    <property type="entry name" value="LRR"/>
    <property type="match status" value="6"/>
</dbReference>
<accession>B4P6W7</accession>
<keyword id="KW-0966">Cell projection</keyword>
<keyword id="KW-0969">Cilium</keyword>
<keyword id="KW-0433">Leucine-rich repeat</keyword>
<keyword id="KW-0677">Repeat</keyword>
<comment type="function">
    <text evidence="1">Cilium-specific protein required for cilia structures.</text>
</comment>
<comment type="subcellular location">
    <subcellularLocation>
        <location evidence="1">Cell projection</location>
        <location evidence="1">Cilium</location>
    </subcellularLocation>
</comment>
<comment type="similarity">
    <text evidence="3">Belongs to the DNAAF1 family.</text>
</comment>
<sequence>MSLSNRKEITGLTRMTPKGLKELCKKDKLYQTPRLNDTLYLHYQGFQCIEHLEEYTELKCLWLECNAISEIQGLEKLSKLKCLFLQNNLITKIENLEPCRELDTLNLSSNHIRKIQNIGTNILPVLNTLTIASNYLKDSESLSDLVQCKTLSVLDLSNNRIDDILIVKIFEQMLNLKVLVLQGNPVVSRLPQYRKTLILACKELTYLDSRPVFPRDRACAEAWKRDGYEGERKENNRWNRAERRKTRESINCTIRIRNSHRPPDQQDPLLRSSDSEDDTCTGTTLKKVALENGCVDDIWKEVSCEHPTSESGASTSSSVEDNDATSSQDDLIAEKLSNRGTLEGRPKVLNETEGSNLKRVNQNIKNVEPRNIQTIVFEEDVSKKSQVIIEEENVPKINLINEPCDLNDKKSIIVKCKKTGYTSIGPVHKKTVFHEDAEIKKMEDVVLCQDFIKSEEHMSSDFAVNSKLGKDIEQTCTAQRNEAQCKEFDEDQKIIEIESKLIHEMYESFEADDDDKLNETFDLNLYETTSEHHAHKVSFDENKMPMSCYQEDKESILLPKSMEETLFEEECFIANDKCAHDLEEIGRQMDEDLAELRQSTQNVVGLSKDEIAETDIETDEEDLLAQQDPYSPLLKQQFKNRRMKIMLIEESKAQGESQRDLNITVSNESGGDDKQDQLFARILDDATENIPKRIFGTGCDALSYNWPQEECLLQLTLSEVKETPAQESTFKNSITNSSSFEEANKICVHMDQKMAEEEEALGKLLHDLENEAEHVYEINTKMTYEETTSSKEVVSICTSLLDDIIVELTLNEILCHEKPKSFKFGPIESDEEFSYSLEPQLEKLVPPALEDPARGKSLRECLDTFSDFVSSMADPKLPLMLGRNPTLGVEKIRAAQELLKSKNLAEIYADSAESLNSQVAKEIEKRKRRVAATATRCFNQRDKYDDTLELVNNRLMIVKRDSGDLEELPPPPPLISDSESEDYDTADDEYTPGKGSHKLGSKPKDSKNLVTNSFLKEKQADSDVVEEVVKKNDHAEDEFYSLEAMTTFSSLDAEFFQKLDLQKVNDSEDSEPAINCMRNYNELQAYMKSGSLNHRMNTEETKTLQTSFSTVGSDEGKTKLRNPQEEKENALLKKMVLRMKEYEEREHQLQLVPHELGSVKLSLGGSKLFEQTPETVLVHTENEPTSKIKFIDNKKTNNDESTHLIKNYCEPLVRASCKTSNKSIDDDIQSDVSTDYESGEEVVVVEPPKLSEAVLKSFYSDGFEADLNMVHELEEATRRNLYCYHSNEMLNPTKNHPFSLKKTLSSKTSTNEVTVGAKAKWAKIAERLHEFLDPETISKLNKEQFGESDEFEDSQDANIFTDITFEENNSKKYENLVSEECNCTKSIYDENSCPSELNGNDQFSGLKEINKDKEMPTSNLELNSVMIQSKKKTSEILPNEIGNIIKACSSFEAPPTDPIGIEHFEDPTLTQMNPEFLKTKQIECNLQILSEDGDVVVQELSVNAQVSFE</sequence>
<reference key="1">
    <citation type="journal article" date="2007" name="Nature">
        <title>Evolution of genes and genomes on the Drosophila phylogeny.</title>
        <authorList>
            <consortium name="Drosophila 12 genomes consortium"/>
        </authorList>
    </citation>
    <scope>NUCLEOTIDE SEQUENCE [LARGE SCALE GENOMIC DNA]</scope>
    <source>
        <strain>Tai18E2 / Tucson 14021-0261.01</strain>
    </source>
</reference>
<gene>
    <name type="primary">dtr</name>
    <name type="ORF">GE12915</name>
</gene>
<organism>
    <name type="scientific">Drosophila yakuba</name>
    <name type="common">Fruit fly</name>
    <dbReference type="NCBI Taxonomy" id="7245"/>
    <lineage>
        <taxon>Eukaryota</taxon>
        <taxon>Metazoa</taxon>
        <taxon>Ecdysozoa</taxon>
        <taxon>Arthropoda</taxon>
        <taxon>Hexapoda</taxon>
        <taxon>Insecta</taxon>
        <taxon>Pterygota</taxon>
        <taxon>Neoptera</taxon>
        <taxon>Endopterygota</taxon>
        <taxon>Diptera</taxon>
        <taxon>Brachycera</taxon>
        <taxon>Muscomorpha</taxon>
        <taxon>Ephydroidea</taxon>
        <taxon>Drosophilidae</taxon>
        <taxon>Drosophila</taxon>
        <taxon>Sophophora</taxon>
    </lineage>
</organism>
<name>DAAF1_DROYA</name>
<feature type="chain" id="PRO_0000363940" description="Dynein axonemal assembly factor 1 homolog">
    <location>
        <begin position="1"/>
        <end position="1509"/>
    </location>
</feature>
<feature type="repeat" description="LRR 1">
    <location>
        <begin position="34"/>
        <end position="56"/>
    </location>
</feature>
<feature type="repeat" description="LRR 2">
    <location>
        <begin position="57"/>
        <end position="78"/>
    </location>
</feature>
<feature type="repeat" description="LRR 3">
    <location>
        <begin position="79"/>
        <end position="100"/>
    </location>
</feature>
<feature type="repeat" description="LRR 4">
    <location>
        <begin position="101"/>
        <end position="122"/>
    </location>
</feature>
<feature type="repeat" description="LRR 5">
    <location>
        <begin position="125"/>
        <end position="146"/>
    </location>
</feature>
<feature type="repeat" description="LRR 6">
    <location>
        <begin position="150"/>
        <end position="171"/>
    </location>
</feature>
<feature type="domain" description="LRRCT">
    <location>
        <begin position="185"/>
        <end position="223"/>
    </location>
</feature>
<feature type="region of interest" description="Disordered" evidence="2">
    <location>
        <begin position="252"/>
        <end position="280"/>
    </location>
</feature>
<feature type="region of interest" description="Disordered" evidence="2">
    <location>
        <begin position="306"/>
        <end position="327"/>
    </location>
</feature>
<feature type="region of interest" description="Disordered" evidence="2">
    <location>
        <begin position="962"/>
        <end position="1008"/>
    </location>
</feature>
<feature type="region of interest" description="Disordered" evidence="2">
    <location>
        <begin position="1103"/>
        <end position="1122"/>
    </location>
</feature>
<feature type="compositionally biased region" description="Low complexity" evidence="2">
    <location>
        <begin position="309"/>
        <end position="318"/>
    </location>
</feature>
<feature type="compositionally biased region" description="Acidic residues" evidence="2">
    <location>
        <begin position="978"/>
        <end position="990"/>
    </location>
</feature>
<feature type="compositionally biased region" description="Polar residues" evidence="2">
    <location>
        <begin position="1103"/>
        <end position="1112"/>
    </location>
</feature>